<protein>
    <recommendedName>
        <fullName>Glycoprotein gp100</fullName>
    </recommendedName>
    <alternativeName>
        <fullName>P29F8</fullName>
    </alternativeName>
</protein>
<proteinExistence type="evidence at transcript level"/>
<reference key="1">
    <citation type="journal article" date="1994" name="J. Cell Biol.">
        <title>Replacement of the phospholipid-anchor in the contact site A glycoprotein of D. discoideum by a transmembrane region does not impede cell adhesion but reduces residence time on the cell surface.</title>
        <authorList>
            <person name="Barth A."/>
            <person name="Mueller-Taubenberger A."/>
            <person name="Taranto P."/>
            <person name="Gerisch G."/>
        </authorList>
    </citation>
    <scope>NUCLEOTIDE SEQUENCE [MRNA]</scope>
</reference>
<reference key="2">
    <citation type="journal article" date="2005" name="Nature">
        <title>The genome of the social amoeba Dictyostelium discoideum.</title>
        <authorList>
            <person name="Eichinger L."/>
            <person name="Pachebat J.A."/>
            <person name="Gloeckner G."/>
            <person name="Rajandream M.A."/>
            <person name="Sucgang R."/>
            <person name="Berriman M."/>
            <person name="Song J."/>
            <person name="Olsen R."/>
            <person name="Szafranski K."/>
            <person name="Xu Q."/>
            <person name="Tunggal B."/>
            <person name="Kummerfeld S."/>
            <person name="Madera M."/>
            <person name="Konfortov B.A."/>
            <person name="Rivero F."/>
            <person name="Bankier A.T."/>
            <person name="Lehmann R."/>
            <person name="Hamlin N."/>
            <person name="Davies R."/>
            <person name="Gaudet P."/>
            <person name="Fey P."/>
            <person name="Pilcher K."/>
            <person name="Chen G."/>
            <person name="Saunders D."/>
            <person name="Sodergren E.J."/>
            <person name="Davis P."/>
            <person name="Kerhornou A."/>
            <person name="Nie X."/>
            <person name="Hall N."/>
            <person name="Anjard C."/>
            <person name="Hemphill L."/>
            <person name="Bason N."/>
            <person name="Farbrother P."/>
            <person name="Desany B."/>
            <person name="Just E."/>
            <person name="Morio T."/>
            <person name="Rost R."/>
            <person name="Churcher C.M."/>
            <person name="Cooper J."/>
            <person name="Haydock S."/>
            <person name="van Driessche N."/>
            <person name="Cronin A."/>
            <person name="Goodhead I."/>
            <person name="Muzny D.M."/>
            <person name="Mourier T."/>
            <person name="Pain A."/>
            <person name="Lu M."/>
            <person name="Harper D."/>
            <person name="Lindsay R."/>
            <person name="Hauser H."/>
            <person name="James K.D."/>
            <person name="Quiles M."/>
            <person name="Madan Babu M."/>
            <person name="Saito T."/>
            <person name="Buchrieser C."/>
            <person name="Wardroper A."/>
            <person name="Felder M."/>
            <person name="Thangavelu M."/>
            <person name="Johnson D."/>
            <person name="Knights A."/>
            <person name="Loulseged H."/>
            <person name="Mungall K.L."/>
            <person name="Oliver K."/>
            <person name="Price C."/>
            <person name="Quail M.A."/>
            <person name="Urushihara H."/>
            <person name="Hernandez J."/>
            <person name="Rabbinowitsch E."/>
            <person name="Steffen D."/>
            <person name="Sanders M."/>
            <person name="Ma J."/>
            <person name="Kohara Y."/>
            <person name="Sharp S."/>
            <person name="Simmonds M.N."/>
            <person name="Spiegler S."/>
            <person name="Tivey A."/>
            <person name="Sugano S."/>
            <person name="White B."/>
            <person name="Walker D."/>
            <person name="Woodward J.R."/>
            <person name="Winckler T."/>
            <person name="Tanaka Y."/>
            <person name="Shaulsky G."/>
            <person name="Schleicher M."/>
            <person name="Weinstock G.M."/>
            <person name="Rosenthal A."/>
            <person name="Cox E.C."/>
            <person name="Chisholm R.L."/>
            <person name="Gibbs R.A."/>
            <person name="Loomis W.F."/>
            <person name="Platzer M."/>
            <person name="Kay R.R."/>
            <person name="Williams J.G."/>
            <person name="Dear P.H."/>
            <person name="Noegel A.A."/>
            <person name="Barrell B.G."/>
            <person name="Kuspa A."/>
        </authorList>
    </citation>
    <scope>NUCLEOTIDE SEQUENCE [LARGE SCALE GENOMIC DNA]</scope>
    <source>
        <strain>AX4</strain>
    </source>
</reference>
<name>GP10_DICDI</name>
<keyword id="KW-0325">Glycoprotein</keyword>
<keyword id="KW-0472">Membrane</keyword>
<keyword id="KW-1185">Reference proteome</keyword>
<keyword id="KW-0732">Signal</keyword>
<keyword id="KW-0812">Transmembrane</keyword>
<keyword id="KW-1133">Transmembrane helix</keyword>
<accession>Q06885</accession>
<accession>Q55FB7</accession>
<organism>
    <name type="scientific">Dictyostelium discoideum</name>
    <name type="common">Social amoeba</name>
    <dbReference type="NCBI Taxonomy" id="44689"/>
    <lineage>
        <taxon>Eukaryota</taxon>
        <taxon>Amoebozoa</taxon>
        <taxon>Evosea</taxon>
        <taxon>Eumycetozoa</taxon>
        <taxon>Dictyostelia</taxon>
        <taxon>Dictyosteliales</taxon>
        <taxon>Dictyosteliaceae</taxon>
        <taxon>Dictyostelium</taxon>
    </lineage>
</organism>
<comment type="subcellular location">
    <subcellularLocation>
        <location>Membrane</location>
        <topology>Single-pass type I membrane protein</topology>
    </subcellularLocation>
</comment>
<comment type="developmental stage">
    <text>Restricted to the aggregation stage of development in D.discoideum. No detectable activity in cell adhesion.</text>
</comment>
<comment type="PTM">
    <text>N- and O-glycosylated.</text>
</comment>
<evidence type="ECO:0000255" key="1"/>
<evidence type="ECO:0000256" key="2">
    <source>
        <dbReference type="SAM" id="MobiDB-lite"/>
    </source>
</evidence>
<dbReference type="EMBL" id="L04286">
    <property type="protein sequence ID" value="AAC37369.1"/>
    <property type="molecule type" value="mRNA"/>
</dbReference>
<dbReference type="EMBL" id="AAFI02000003">
    <property type="protein sequence ID" value="EAL73151.1"/>
    <property type="molecule type" value="Genomic_DNA"/>
</dbReference>
<dbReference type="RefSeq" id="XP_647616.1">
    <property type="nucleotide sequence ID" value="XM_642524.1"/>
</dbReference>
<dbReference type="SMR" id="Q06885"/>
<dbReference type="FunCoup" id="Q06885">
    <property type="interactions" value="706"/>
</dbReference>
<dbReference type="STRING" id="44689.Q06885"/>
<dbReference type="GlyCosmos" id="Q06885">
    <property type="glycosylation" value="9 sites, No reported glycans"/>
</dbReference>
<dbReference type="GlyGen" id="Q06885">
    <property type="glycosylation" value="16 sites"/>
</dbReference>
<dbReference type="PaxDb" id="44689-DDB0191207"/>
<dbReference type="EnsemblProtists" id="EAL73151">
    <property type="protein sequence ID" value="EAL73151"/>
    <property type="gene ID" value="DDB_G0267398"/>
</dbReference>
<dbReference type="GeneID" id="8616428"/>
<dbReference type="KEGG" id="ddi:DDB_G0267398"/>
<dbReference type="dictyBase" id="DDB_G0267398">
    <property type="gene designation" value="gppA"/>
</dbReference>
<dbReference type="VEuPathDB" id="AmoebaDB:DDB_G0267398"/>
<dbReference type="eggNOG" id="ENOG502RHC1">
    <property type="taxonomic scope" value="Eukaryota"/>
</dbReference>
<dbReference type="HOGENOM" id="CLU_501026_0_0_1"/>
<dbReference type="InParanoid" id="Q06885"/>
<dbReference type="OMA" id="CENRINS"/>
<dbReference type="PRO" id="PR:Q06885"/>
<dbReference type="Proteomes" id="UP000002195">
    <property type="component" value="Chromosome 1"/>
</dbReference>
<dbReference type="GO" id="GO:0000331">
    <property type="term" value="C:contractile vacuole"/>
    <property type="evidence" value="ECO:0000314"/>
    <property type="project" value="dictyBase"/>
</dbReference>
<dbReference type="GO" id="GO:0016020">
    <property type="term" value="C:membrane"/>
    <property type="evidence" value="ECO:0007669"/>
    <property type="project" value="UniProtKB-SubCell"/>
</dbReference>
<dbReference type="GO" id="GO:0006971">
    <property type="term" value="P:hypotonic response"/>
    <property type="evidence" value="ECO:0007007"/>
    <property type="project" value="dictyBase"/>
</dbReference>
<dbReference type="InterPro" id="IPR052014">
    <property type="entry name" value="Dictyostelium_Tiger"/>
</dbReference>
<dbReference type="InterPro" id="IPR014756">
    <property type="entry name" value="Ig_E-set"/>
</dbReference>
<dbReference type="InterPro" id="IPR002909">
    <property type="entry name" value="IPT_dom"/>
</dbReference>
<dbReference type="PANTHER" id="PTHR31341:SF14">
    <property type="entry name" value="GLYCOPROTEIN GP100"/>
    <property type="match status" value="1"/>
</dbReference>
<dbReference type="PANTHER" id="PTHR31341">
    <property type="entry name" value="IPT/TIG DOMAIN-CONTAINING PROTEIN-RELATED-RELATED"/>
    <property type="match status" value="1"/>
</dbReference>
<dbReference type="Pfam" id="PF01833">
    <property type="entry name" value="TIG"/>
    <property type="match status" value="1"/>
</dbReference>
<dbReference type="SUPFAM" id="SSF81296">
    <property type="entry name" value="E set domains"/>
    <property type="match status" value="1"/>
</dbReference>
<feature type="signal peptide" evidence="1">
    <location>
        <begin position="1"/>
        <end position="19"/>
    </location>
</feature>
<feature type="chain" id="PRO_0000021342" description="Glycoprotein gp100">
    <location>
        <begin position="20"/>
        <end position="544"/>
    </location>
</feature>
<feature type="topological domain" description="Extracellular" evidence="1">
    <location>
        <begin position="20"/>
        <end position="489"/>
    </location>
</feature>
<feature type="transmembrane region" description="Helical" evidence="1">
    <location>
        <begin position="490"/>
        <end position="510"/>
    </location>
</feature>
<feature type="topological domain" description="Cytoplasmic" evidence="1">
    <location>
        <begin position="511"/>
        <end position="544"/>
    </location>
</feature>
<feature type="region of interest" description="Disordered" evidence="2">
    <location>
        <begin position="84"/>
        <end position="215"/>
    </location>
</feature>
<feature type="region of interest" description="Disordered" evidence="2">
    <location>
        <begin position="444"/>
        <end position="480"/>
    </location>
</feature>
<feature type="compositionally biased region" description="Polar residues" evidence="2">
    <location>
        <begin position="84"/>
        <end position="99"/>
    </location>
</feature>
<feature type="compositionally biased region" description="Low complexity" evidence="2">
    <location>
        <begin position="126"/>
        <end position="142"/>
    </location>
</feature>
<feature type="compositionally biased region" description="Low complexity" evidence="2">
    <location>
        <begin position="150"/>
        <end position="165"/>
    </location>
</feature>
<feature type="compositionally biased region" description="Low complexity" evidence="2">
    <location>
        <begin position="189"/>
        <end position="199"/>
    </location>
</feature>
<feature type="glycosylation site" description="N-linked (GlcNAc...) asparagine" evidence="1">
    <location>
        <position position="80"/>
    </location>
</feature>
<feature type="glycosylation site" description="N-linked (GlcNAc...) asparagine" evidence="1">
    <location>
        <position position="224"/>
    </location>
</feature>
<feature type="glycosylation site" description="N-linked (GlcNAc...) asparagine" evidence="1">
    <location>
        <position position="308"/>
    </location>
</feature>
<feature type="glycosylation site" description="N-linked (GlcNAc...) asparagine" evidence="1">
    <location>
        <position position="332"/>
    </location>
</feature>
<feature type="glycosylation site" description="N-linked (GlcNAc...) asparagine" evidence="1">
    <location>
        <position position="366"/>
    </location>
</feature>
<feature type="glycosylation site" description="N-linked (GlcNAc...) asparagine" evidence="1">
    <location>
        <position position="380"/>
    </location>
</feature>
<feature type="glycosylation site" description="N-linked (GlcNAc...) asparagine" evidence="1">
    <location>
        <position position="410"/>
    </location>
</feature>
<feature type="glycosylation site" description="N-linked (GlcNAc...) asparagine" evidence="1">
    <location>
        <position position="422"/>
    </location>
</feature>
<feature type="glycosylation site" description="N-linked (GlcNAc...) asparagine" evidence="1">
    <location>
        <position position="478"/>
    </location>
</feature>
<gene>
    <name type="primary">gppA</name>
    <name type="ORF">DDB_G0267398</name>
</gene>
<sequence length="544" mass="59157">MKNFILLVFLFLLVSNSLGKSNKKDDQSPEIVKINSNDHLPLYYEIIISGHFSIDKTGLTVTYLGDKIHDFEFIKGQVLNVTGEPQNNPIPTVSINPDQLNDDRFEVSDSSDFSKQTPTPTPTPTSKPTSTPTSTPSQTIPPTVSPTVPPQTTSPTSKPTSTPTPTSTPTPTSTPTPTSQTIPPPTTTPKPTKSSKPTKTPVPTPTPTRPSSSVSKGYDIIKFNITDIEDIEMGKITISYKNGQSSSKHFQPNSIIKSIERTNSVGGVVEFKGSFFYTDDYEPSIKIGNKICETLTSSQTSIRCYLTNGTGCGYTITIDNLLNPIDNNGNSNLTYCYANPIIDKVIGYKDKKLTLITIIGKNFLNNATVIIEKPNGNKRNCSNVLLSTDTLFICELSKSYHTLSSPKTTNTTMLSFINNSPNSTVSNEIIEMISGYFQIKISTKPSTTDDDNNKNNDDGDSEIDSVGKSAVDSSKSNNNSGGGGNKKLYLLIILPTVLFIIVAALVAIFIKTRVSQNSGSKVNKNNNKKDSINVPFQMLDEITT</sequence>